<proteinExistence type="inferred from homology"/>
<gene>
    <name type="primary">grxC1</name>
    <name type="synonym">grx</name>
    <name type="ordered locus">RP204</name>
</gene>
<comment type="function">
    <text evidence="1">Has a glutathione-disulfide oxidoreductase activity in the presence of NADPH and glutathione reductase. Reduces low molecular weight disulfides and proteins (By similarity).</text>
</comment>
<comment type="subunit">
    <text evidence="1">Monomer.</text>
</comment>
<comment type="subcellular location">
    <subcellularLocation>
        <location evidence="1">Cytoplasm</location>
    </subcellularLocation>
</comment>
<comment type="similarity">
    <text evidence="3">Belongs to the glutaredoxin family.</text>
</comment>
<feature type="chain" id="PRO_0000141595" description="Glutaredoxin 1">
    <location>
        <begin position="1"/>
        <end position="95"/>
    </location>
</feature>
<feature type="domain" description="Glutaredoxin" evidence="2">
    <location>
        <begin position="1"/>
        <end position="95"/>
    </location>
</feature>
<feature type="disulfide bond" description="Redox-active" evidence="1">
    <location>
        <begin position="17"/>
        <end position="20"/>
    </location>
</feature>
<organism>
    <name type="scientific">Rickettsia prowazekii (strain Madrid E)</name>
    <dbReference type="NCBI Taxonomy" id="272947"/>
    <lineage>
        <taxon>Bacteria</taxon>
        <taxon>Pseudomonadati</taxon>
        <taxon>Pseudomonadota</taxon>
        <taxon>Alphaproteobacteria</taxon>
        <taxon>Rickettsiales</taxon>
        <taxon>Rickettsiaceae</taxon>
        <taxon>Rickettsieae</taxon>
        <taxon>Rickettsia</taxon>
        <taxon>typhus group</taxon>
    </lineage>
</organism>
<accession>Q9ZDW1</accession>
<protein>
    <recommendedName>
        <fullName>Glutaredoxin 1</fullName>
    </recommendedName>
</protein>
<keyword id="KW-0963">Cytoplasm</keyword>
<keyword id="KW-1015">Disulfide bond</keyword>
<keyword id="KW-0249">Electron transport</keyword>
<keyword id="KW-0676">Redox-active center</keyword>
<keyword id="KW-1185">Reference proteome</keyword>
<keyword id="KW-0813">Transport</keyword>
<sequence length="95" mass="10851">MNKSILHTIIIYTLASCPYCIKAKALLDKKNVIYEEIEVSNLTQEEKEKFIKKSGGKSTVPQIFIDNMHVGGCDDLFNLEKEGRLDKLLEHQPKN</sequence>
<dbReference type="EMBL" id="AJ235270">
    <property type="protein sequence ID" value="CAA14669.1"/>
    <property type="molecule type" value="Genomic_DNA"/>
</dbReference>
<dbReference type="PIR" id="F71731">
    <property type="entry name" value="F71731"/>
</dbReference>
<dbReference type="RefSeq" id="NP_220592.1">
    <property type="nucleotide sequence ID" value="NC_000963.1"/>
</dbReference>
<dbReference type="SMR" id="Q9ZDW1"/>
<dbReference type="STRING" id="272947.gene:17555285"/>
<dbReference type="EnsemblBacteria" id="CAA14669">
    <property type="protein sequence ID" value="CAA14669"/>
    <property type="gene ID" value="CAA14669"/>
</dbReference>
<dbReference type="KEGG" id="rpr:RP204"/>
<dbReference type="PATRIC" id="fig|272947.5.peg.213"/>
<dbReference type="eggNOG" id="COG0695">
    <property type="taxonomic scope" value="Bacteria"/>
</dbReference>
<dbReference type="HOGENOM" id="CLU_026126_7_3_5"/>
<dbReference type="OrthoDB" id="9814618at2"/>
<dbReference type="Proteomes" id="UP000002480">
    <property type="component" value="Chromosome"/>
</dbReference>
<dbReference type="GO" id="GO:0005737">
    <property type="term" value="C:cytoplasm"/>
    <property type="evidence" value="ECO:0007669"/>
    <property type="project" value="UniProtKB-SubCell"/>
</dbReference>
<dbReference type="GO" id="GO:0015035">
    <property type="term" value="F:protein-disulfide reductase activity"/>
    <property type="evidence" value="ECO:0007669"/>
    <property type="project" value="TreeGrafter"/>
</dbReference>
<dbReference type="GO" id="GO:0045454">
    <property type="term" value="P:cell redox homeostasis"/>
    <property type="evidence" value="ECO:0007669"/>
    <property type="project" value="InterPro"/>
</dbReference>
<dbReference type="CDD" id="cd03418">
    <property type="entry name" value="GRX_GRXb_1_3_like"/>
    <property type="match status" value="1"/>
</dbReference>
<dbReference type="FunFam" id="3.40.30.10:FF:000018">
    <property type="entry name" value="Glutaredoxin"/>
    <property type="match status" value="1"/>
</dbReference>
<dbReference type="Gene3D" id="3.40.30.10">
    <property type="entry name" value="Glutaredoxin"/>
    <property type="match status" value="1"/>
</dbReference>
<dbReference type="InterPro" id="IPR011767">
    <property type="entry name" value="GLR_AS"/>
</dbReference>
<dbReference type="InterPro" id="IPR002109">
    <property type="entry name" value="Glutaredoxin"/>
</dbReference>
<dbReference type="InterPro" id="IPR014025">
    <property type="entry name" value="Glutaredoxin_subgr"/>
</dbReference>
<dbReference type="InterPro" id="IPR011900">
    <property type="entry name" value="GRX_bact"/>
</dbReference>
<dbReference type="InterPro" id="IPR036249">
    <property type="entry name" value="Thioredoxin-like_sf"/>
</dbReference>
<dbReference type="NCBIfam" id="TIGR02181">
    <property type="entry name" value="GRX_bact"/>
    <property type="match status" value="1"/>
</dbReference>
<dbReference type="PANTHER" id="PTHR46679">
    <property type="match status" value="1"/>
</dbReference>
<dbReference type="PANTHER" id="PTHR46679:SF1">
    <property type="entry name" value="GLUTAREDOXIN-2, MITOCHONDRIAL"/>
    <property type="match status" value="1"/>
</dbReference>
<dbReference type="Pfam" id="PF00462">
    <property type="entry name" value="Glutaredoxin"/>
    <property type="match status" value="1"/>
</dbReference>
<dbReference type="PRINTS" id="PR00160">
    <property type="entry name" value="GLUTAREDOXIN"/>
</dbReference>
<dbReference type="SUPFAM" id="SSF52833">
    <property type="entry name" value="Thioredoxin-like"/>
    <property type="match status" value="1"/>
</dbReference>
<dbReference type="PROSITE" id="PS00195">
    <property type="entry name" value="GLUTAREDOXIN_1"/>
    <property type="match status" value="1"/>
</dbReference>
<dbReference type="PROSITE" id="PS51354">
    <property type="entry name" value="GLUTAREDOXIN_2"/>
    <property type="match status" value="1"/>
</dbReference>
<name>GLRX1_RICPR</name>
<reference key="1">
    <citation type="journal article" date="1998" name="Nature">
        <title>The genome sequence of Rickettsia prowazekii and the origin of mitochondria.</title>
        <authorList>
            <person name="Andersson S.G.E."/>
            <person name="Zomorodipour A."/>
            <person name="Andersson J.O."/>
            <person name="Sicheritz-Ponten T."/>
            <person name="Alsmark U.C.M."/>
            <person name="Podowski R.M."/>
            <person name="Naeslund A.K."/>
            <person name="Eriksson A.-S."/>
            <person name="Winkler H.H."/>
            <person name="Kurland C.G."/>
        </authorList>
    </citation>
    <scope>NUCLEOTIDE SEQUENCE [LARGE SCALE GENOMIC DNA]</scope>
    <source>
        <strain>Madrid E</strain>
    </source>
</reference>
<evidence type="ECO:0000250" key="1"/>
<evidence type="ECO:0000255" key="2">
    <source>
        <dbReference type="PROSITE-ProRule" id="PRU00686"/>
    </source>
</evidence>
<evidence type="ECO:0000305" key="3"/>